<gene>
    <name type="primary">CCOAOMT</name>
</gene>
<comment type="function">
    <text>Methylates caffeoyl-CoA to feruloyl-CoA and 5-hydroxyferuloyl-CoA to sinapoyl-CoA. Plays a role in the synthesis of feruloylated polysaccharides. Involved in the reinforcement of the plant cell wall. Also involved in the responding to wounding or pathogen challenge by the increased formation of cell wall-bound ferulic acid polymers.</text>
</comment>
<comment type="catalytic activity">
    <reaction>
        <text>(E)-caffeoyl-CoA + S-adenosyl-L-methionine = (E)-feruloyl-CoA + S-adenosyl-L-homocysteine + H(+)</text>
        <dbReference type="Rhea" id="RHEA:16925"/>
        <dbReference type="ChEBI" id="CHEBI:15378"/>
        <dbReference type="ChEBI" id="CHEBI:57856"/>
        <dbReference type="ChEBI" id="CHEBI:59789"/>
        <dbReference type="ChEBI" id="CHEBI:87136"/>
        <dbReference type="ChEBI" id="CHEBI:87305"/>
        <dbReference type="EC" id="2.1.1.104"/>
    </reaction>
</comment>
<comment type="cofactor">
    <cofactor evidence="1">
        <name>a divalent metal cation</name>
        <dbReference type="ChEBI" id="CHEBI:60240"/>
    </cofactor>
    <text evidence="1">Binds 1 divalent metal cation per subunit.</text>
</comment>
<comment type="pathway">
    <text>Aromatic compound metabolism; phenylpropanoid biosynthesis.</text>
</comment>
<comment type="similarity">
    <text evidence="2">Belongs to the class I-like SAM-binding methyltransferase superfamily. Cation-dependent O-methyltransferase family. CCoAMT subfamily.</text>
</comment>
<sequence length="245" mass="27647">MATPTGETQPAKHQEVGHKSLLQSDALYQYILETSVYPREPQPMKELRRITAKHPWNLMTTSADEGQFLNLLLKLINAKNTMEIGVYTGYSLLSTALALPEDGKILALDINRENYEIGLPIIQKAGVAHKIDFREGPALPLLDQMLQDEKCHGSFDFIFVDADKDNYLNYHKRLIDLVKFGGVIGYDNTLWNGSLVAPADAPLRKYVRYYRDFVLELNKALAVDPRVEICQLPVGDGITLCRRIS</sequence>
<dbReference type="EC" id="2.1.1.104"/>
<dbReference type="EMBL" id="U13151">
    <property type="protein sequence ID" value="AAA59389.1"/>
    <property type="molecule type" value="mRNA"/>
</dbReference>
<dbReference type="SMR" id="Q41720"/>
<dbReference type="UniPathway" id="UPA00711"/>
<dbReference type="GO" id="GO:0042409">
    <property type="term" value="F:caffeoyl-CoA O-methyltransferase activity"/>
    <property type="evidence" value="ECO:0007669"/>
    <property type="project" value="UniProtKB-EC"/>
</dbReference>
<dbReference type="GO" id="GO:0046872">
    <property type="term" value="F:metal ion binding"/>
    <property type="evidence" value="ECO:0007669"/>
    <property type="project" value="UniProtKB-KW"/>
</dbReference>
<dbReference type="GO" id="GO:0009809">
    <property type="term" value="P:lignin biosynthetic process"/>
    <property type="evidence" value="ECO:0007669"/>
    <property type="project" value="UniProtKB-KW"/>
</dbReference>
<dbReference type="GO" id="GO:0032259">
    <property type="term" value="P:methylation"/>
    <property type="evidence" value="ECO:0007669"/>
    <property type="project" value="UniProtKB-KW"/>
</dbReference>
<dbReference type="FunFam" id="3.40.50.150:FF:000147">
    <property type="entry name" value="Caffeoyl-CoA O-methyltransferase 1"/>
    <property type="match status" value="1"/>
</dbReference>
<dbReference type="Gene3D" id="3.40.50.150">
    <property type="entry name" value="Vaccinia Virus protein VP39"/>
    <property type="match status" value="1"/>
</dbReference>
<dbReference type="InterPro" id="IPR050362">
    <property type="entry name" value="Cation-dep_OMT"/>
</dbReference>
<dbReference type="InterPro" id="IPR029063">
    <property type="entry name" value="SAM-dependent_MTases_sf"/>
</dbReference>
<dbReference type="InterPro" id="IPR002935">
    <property type="entry name" value="SAM_O-MeTrfase"/>
</dbReference>
<dbReference type="PANTHER" id="PTHR10509:SF64">
    <property type="entry name" value="CAFFEOYL-COA O-METHYLTRANSFERASE"/>
    <property type="match status" value="1"/>
</dbReference>
<dbReference type="PANTHER" id="PTHR10509">
    <property type="entry name" value="O-METHYLTRANSFERASE-RELATED"/>
    <property type="match status" value="1"/>
</dbReference>
<dbReference type="Pfam" id="PF01596">
    <property type="entry name" value="Methyltransf_3"/>
    <property type="match status" value="1"/>
</dbReference>
<dbReference type="SUPFAM" id="SSF53335">
    <property type="entry name" value="S-adenosyl-L-methionine-dependent methyltransferases"/>
    <property type="match status" value="1"/>
</dbReference>
<dbReference type="PROSITE" id="PS51682">
    <property type="entry name" value="SAM_OMT_I"/>
    <property type="match status" value="1"/>
</dbReference>
<keyword id="KW-0438">Lignin biosynthesis</keyword>
<keyword id="KW-0479">Metal-binding</keyword>
<keyword id="KW-0489">Methyltransferase</keyword>
<keyword id="KW-0949">S-adenosyl-L-methionine</keyword>
<keyword id="KW-0808">Transferase</keyword>
<feature type="chain" id="PRO_0000165704" description="Caffeoyl-CoA O-methyltransferase">
    <location>
        <begin position="1"/>
        <end position="245"/>
    </location>
</feature>
<feature type="binding site" evidence="1">
    <location>
        <position position="19"/>
    </location>
    <ligand>
        <name>substrate</name>
    </ligand>
</feature>
<feature type="binding site" evidence="2">
    <location>
        <position position="61"/>
    </location>
    <ligand>
        <name>S-adenosyl-L-methionine</name>
        <dbReference type="ChEBI" id="CHEBI:59789"/>
    </ligand>
</feature>
<feature type="binding site" evidence="2">
    <location>
        <position position="83"/>
    </location>
    <ligand>
        <name>S-adenosyl-L-methionine</name>
        <dbReference type="ChEBI" id="CHEBI:59789"/>
    </ligand>
</feature>
<feature type="binding site" evidence="2">
    <location>
        <begin position="85"/>
        <end position="86"/>
    </location>
    <ligand>
        <name>S-adenosyl-L-methionine</name>
        <dbReference type="ChEBI" id="CHEBI:59789"/>
    </ligand>
</feature>
<feature type="binding site" evidence="2">
    <location>
        <position position="91"/>
    </location>
    <ligand>
        <name>S-adenosyl-L-methionine</name>
        <dbReference type="ChEBI" id="CHEBI:59789"/>
    </ligand>
</feature>
<feature type="binding site" evidence="2">
    <location>
        <position position="109"/>
    </location>
    <ligand>
        <name>S-adenosyl-L-methionine</name>
        <dbReference type="ChEBI" id="CHEBI:59789"/>
    </ligand>
</feature>
<feature type="binding site" evidence="2">
    <location>
        <position position="138"/>
    </location>
    <ligand>
        <name>S-adenosyl-L-methionine</name>
        <dbReference type="ChEBI" id="CHEBI:59789"/>
    </ligand>
</feature>
<feature type="binding site" evidence="2">
    <location>
        <position position="161"/>
    </location>
    <ligand>
        <name>a divalent metal cation</name>
        <dbReference type="ChEBI" id="CHEBI:60240"/>
    </ligand>
</feature>
<feature type="binding site" evidence="1">
    <location>
        <position position="161"/>
    </location>
    <ligand>
        <name>substrate</name>
    </ligand>
</feature>
<feature type="binding site" evidence="2">
    <location>
        <position position="163"/>
    </location>
    <ligand>
        <name>S-adenosyl-L-methionine</name>
        <dbReference type="ChEBI" id="CHEBI:59789"/>
    </ligand>
</feature>
<feature type="binding site" evidence="2">
    <location>
        <position position="187"/>
    </location>
    <ligand>
        <name>a divalent metal cation</name>
        <dbReference type="ChEBI" id="CHEBI:60240"/>
    </ligand>
</feature>
<feature type="binding site" evidence="2">
    <location>
        <position position="188"/>
    </location>
    <ligand>
        <name>a divalent metal cation</name>
        <dbReference type="ChEBI" id="CHEBI:60240"/>
    </ligand>
</feature>
<feature type="binding site" evidence="1">
    <location>
        <position position="192"/>
    </location>
    <ligand>
        <name>substrate</name>
    </ligand>
</feature>
<name>CAMT_ZINEL</name>
<reference key="1">
    <citation type="journal article" date="1994" name="Plant Cell">
        <title>An alternative methylation pathway in lignin biosynthesis in Zinnia.</title>
        <authorList>
            <person name="Ye Z.-H."/>
            <person name="Kneusel R.E."/>
            <person name="Matern U."/>
            <person name="Varner J.E."/>
        </authorList>
    </citation>
    <scope>NUCLEOTIDE SEQUENCE [MRNA]</scope>
    <source>
        <strain>cv. Peter Pan</strain>
    </source>
</reference>
<organism>
    <name type="scientific">Zinnia elegans</name>
    <name type="common">Garden zinnia</name>
    <name type="synonym">Zinnia violacea</name>
    <dbReference type="NCBI Taxonomy" id="34245"/>
    <lineage>
        <taxon>Eukaryota</taxon>
        <taxon>Viridiplantae</taxon>
        <taxon>Streptophyta</taxon>
        <taxon>Embryophyta</taxon>
        <taxon>Tracheophyta</taxon>
        <taxon>Spermatophyta</taxon>
        <taxon>Magnoliopsida</taxon>
        <taxon>eudicotyledons</taxon>
        <taxon>Gunneridae</taxon>
        <taxon>Pentapetalae</taxon>
        <taxon>asterids</taxon>
        <taxon>campanulids</taxon>
        <taxon>Asterales</taxon>
        <taxon>Asteraceae</taxon>
        <taxon>Asteroideae</taxon>
        <taxon>Heliantheae alliance</taxon>
        <taxon>Heliantheae</taxon>
        <taxon>Zinnia</taxon>
    </lineage>
</organism>
<accession>Q41720</accession>
<protein>
    <recommendedName>
        <fullName>Caffeoyl-CoA O-methyltransferase</fullName>
        <ecNumber>2.1.1.104</ecNumber>
    </recommendedName>
    <alternativeName>
        <fullName>Trans-caffeoyl-CoA 3-O-methyltransferase</fullName>
        <shortName>CCoAMT</shortName>
        <shortName>CCoAOMT</shortName>
    </alternativeName>
</protein>
<evidence type="ECO:0000250" key="1">
    <source>
        <dbReference type="UniProtKB" id="Q40313"/>
    </source>
</evidence>
<evidence type="ECO:0000255" key="2">
    <source>
        <dbReference type="PROSITE-ProRule" id="PRU01019"/>
    </source>
</evidence>
<proteinExistence type="evidence at transcript level"/>